<proteinExistence type="inferred from homology"/>
<evidence type="ECO:0000255" key="1">
    <source>
        <dbReference type="HAMAP-Rule" id="MF_00023"/>
    </source>
</evidence>
<organism>
    <name type="scientific">Thermotoga sp. (strain RQ2)</name>
    <dbReference type="NCBI Taxonomy" id="126740"/>
    <lineage>
        <taxon>Bacteria</taxon>
        <taxon>Thermotogati</taxon>
        <taxon>Thermotogota</taxon>
        <taxon>Thermotogae</taxon>
        <taxon>Thermotogales</taxon>
        <taxon>Thermotogaceae</taxon>
        <taxon>Thermotoga</taxon>
    </lineage>
</organism>
<accession>B1L9P9</accession>
<gene>
    <name evidence="1" type="primary">smpB</name>
    <name type="ordered locus">TRQ2_0694</name>
</gene>
<keyword id="KW-0963">Cytoplasm</keyword>
<keyword id="KW-0694">RNA-binding</keyword>
<protein>
    <recommendedName>
        <fullName evidence="1">SsrA-binding protein</fullName>
    </recommendedName>
    <alternativeName>
        <fullName evidence="1">Small protein B</fullName>
    </alternativeName>
</protein>
<comment type="function">
    <text evidence="1">Required for rescue of stalled ribosomes mediated by trans-translation. Binds to transfer-messenger RNA (tmRNA), required for stable association of tmRNA with ribosomes. tmRNA and SmpB together mimic tRNA shape, replacing the anticodon stem-loop with SmpB. tmRNA is encoded by the ssrA gene; the 2 termini fold to resemble tRNA(Ala) and it encodes a 'tag peptide', a short internal open reading frame. During trans-translation Ala-aminoacylated tmRNA acts like a tRNA, entering the A-site of stalled ribosomes, displacing the stalled mRNA. The ribosome then switches to translate the ORF on the tmRNA; the nascent peptide is terminated with the 'tag peptide' encoded by the tmRNA and targeted for degradation. The ribosome is freed to recommence translation, which seems to be the essential function of trans-translation.</text>
</comment>
<comment type="subcellular location">
    <subcellularLocation>
        <location evidence="1">Cytoplasm</location>
    </subcellularLocation>
    <text evidence="1">The tmRNA-SmpB complex associates with stalled 70S ribosomes.</text>
</comment>
<comment type="similarity">
    <text evidence="1">Belongs to the SmpB family.</text>
</comment>
<sequence length="150" mass="17594">MVKVVATNKKAYTDYEILETYEAGIVLTGTEVKSLRNGSVNFKDSFCRFKNGELYLLNLHIPPYSHGGVYNHDPERPRKLLLHKRELKRLMGKVQEEGVTIVPLKIYFNDRGIAKVEIAVARGKKKYDKREAIKKREMERKIREYMKYSR</sequence>
<feature type="chain" id="PRO_1000090196" description="SsrA-binding protein">
    <location>
        <begin position="1"/>
        <end position="150"/>
    </location>
</feature>
<name>SSRP_THESQ</name>
<dbReference type="EMBL" id="CP000969">
    <property type="protein sequence ID" value="ACB09047.1"/>
    <property type="molecule type" value="Genomic_DNA"/>
</dbReference>
<dbReference type="RefSeq" id="WP_011943280.1">
    <property type="nucleotide sequence ID" value="NC_010483.1"/>
</dbReference>
<dbReference type="SMR" id="B1L9P9"/>
<dbReference type="KEGG" id="trq:TRQ2_0694"/>
<dbReference type="HOGENOM" id="CLU_108953_0_1_0"/>
<dbReference type="Proteomes" id="UP000001687">
    <property type="component" value="Chromosome"/>
</dbReference>
<dbReference type="GO" id="GO:0005829">
    <property type="term" value="C:cytosol"/>
    <property type="evidence" value="ECO:0007669"/>
    <property type="project" value="TreeGrafter"/>
</dbReference>
<dbReference type="GO" id="GO:0003723">
    <property type="term" value="F:RNA binding"/>
    <property type="evidence" value="ECO:0007669"/>
    <property type="project" value="UniProtKB-UniRule"/>
</dbReference>
<dbReference type="GO" id="GO:0070929">
    <property type="term" value="P:trans-translation"/>
    <property type="evidence" value="ECO:0007669"/>
    <property type="project" value="UniProtKB-UniRule"/>
</dbReference>
<dbReference type="CDD" id="cd09294">
    <property type="entry name" value="SmpB"/>
    <property type="match status" value="1"/>
</dbReference>
<dbReference type="Gene3D" id="2.40.280.10">
    <property type="match status" value="1"/>
</dbReference>
<dbReference type="HAMAP" id="MF_00023">
    <property type="entry name" value="SmpB"/>
    <property type="match status" value="1"/>
</dbReference>
<dbReference type="InterPro" id="IPR023620">
    <property type="entry name" value="SmpB"/>
</dbReference>
<dbReference type="InterPro" id="IPR000037">
    <property type="entry name" value="SsrA-bd_prot"/>
</dbReference>
<dbReference type="InterPro" id="IPR020081">
    <property type="entry name" value="SsrA-bd_prot_CS"/>
</dbReference>
<dbReference type="NCBIfam" id="NF003843">
    <property type="entry name" value="PRK05422.1"/>
    <property type="match status" value="1"/>
</dbReference>
<dbReference type="NCBIfam" id="TIGR00086">
    <property type="entry name" value="smpB"/>
    <property type="match status" value="1"/>
</dbReference>
<dbReference type="PANTHER" id="PTHR30308:SF2">
    <property type="entry name" value="SSRA-BINDING PROTEIN"/>
    <property type="match status" value="1"/>
</dbReference>
<dbReference type="PANTHER" id="PTHR30308">
    <property type="entry name" value="TMRNA-BINDING COMPONENT OF TRANS-TRANSLATION TAGGING COMPLEX"/>
    <property type="match status" value="1"/>
</dbReference>
<dbReference type="Pfam" id="PF01668">
    <property type="entry name" value="SmpB"/>
    <property type="match status" value="1"/>
</dbReference>
<dbReference type="SUPFAM" id="SSF74982">
    <property type="entry name" value="Small protein B (SmpB)"/>
    <property type="match status" value="1"/>
</dbReference>
<dbReference type="PROSITE" id="PS01317">
    <property type="entry name" value="SSRP"/>
    <property type="match status" value="1"/>
</dbReference>
<reference key="1">
    <citation type="journal article" date="2011" name="J. Bacteriol.">
        <title>Genome sequence of Thermotoga sp. strain RQ2, a hyperthermophilic bacterium isolated from a geothermally heated region of the seafloor near Ribeira Quente, the Azores.</title>
        <authorList>
            <person name="Swithers K.S."/>
            <person name="DiPippo J.L."/>
            <person name="Bruce D.C."/>
            <person name="Detter C."/>
            <person name="Tapia R."/>
            <person name="Han S."/>
            <person name="Saunders E."/>
            <person name="Goodwin L.A."/>
            <person name="Han J."/>
            <person name="Woyke T."/>
            <person name="Pitluck S."/>
            <person name="Pennacchio L."/>
            <person name="Nolan M."/>
            <person name="Mikhailova N."/>
            <person name="Lykidis A."/>
            <person name="Land M.L."/>
            <person name="Brettin T."/>
            <person name="Stetter K.O."/>
            <person name="Nelson K.E."/>
            <person name="Gogarten J.P."/>
            <person name="Noll K.M."/>
        </authorList>
    </citation>
    <scope>NUCLEOTIDE SEQUENCE [LARGE SCALE GENOMIC DNA]</scope>
    <source>
        <strain>RQ2</strain>
    </source>
</reference>